<evidence type="ECO:0000250" key="1"/>
<evidence type="ECO:0000255" key="2">
    <source>
        <dbReference type="PROSITE-ProRule" id="PRU00387"/>
    </source>
</evidence>
<evidence type="ECO:0000305" key="3"/>
<accession>B0RN01</accession>
<sequence length="230" mass="25711">MSLGNTTVVTTTVRNATPSLTLDAGTIERFLAHSHRRRYPTRTDVFRPGDPAGTLYYVISGSVSIIAEEDDDRELVLGYFGSGEFVGEMGLFIESDTREVILRTRTQCELAEISYERLQQLFQTSLSPDAPRILYAIGVQLSKRLLDTTRKASRLAFLDVTDRIVRTLHDLSKEPEAMSHPQGTQLRVSRQELARLVGCSREMAGRVLKKLQADGLLHARGKTVVLYGTR</sequence>
<comment type="function">
    <text evidence="1">Global transcriptional regulator that regulates virulence factors production by activating or repressing the expression of a large set of genes in diffusible signal factor (DSF) pathway.</text>
</comment>
<comment type="activity regulation">
    <text evidence="1">Allosterically inhibited by cyclic di-GMP (c-di-GMP), which binds to Clp and abolishes its ability to bind its target gene promoter.</text>
</comment>
<comment type="subunit">
    <text evidence="1">Homodimer.</text>
</comment>
<comment type="subcellular location">
    <subcellularLocation>
        <location evidence="3">Cytoplasm</location>
    </subcellularLocation>
</comment>
<comment type="domain">
    <text evidence="1">Binding of c-di-GMP appears to trigger the active Clp conformation into an open form or inactive state, hence abolishing its DNA-binding ability.</text>
</comment>
<reference key="1">
    <citation type="journal article" date="2008" name="J. Biotechnol.">
        <title>The genome of Xanthomonas campestris pv. campestris B100 and its use for the reconstruction of metabolic pathways involved in xanthan biosynthesis.</title>
        <authorList>
            <person name="Vorhoelter F.-J."/>
            <person name="Schneiker S."/>
            <person name="Goesmann A."/>
            <person name="Krause L."/>
            <person name="Bekel T."/>
            <person name="Kaiser O."/>
            <person name="Linke B."/>
            <person name="Patschkowski T."/>
            <person name="Rueckert C."/>
            <person name="Schmid J."/>
            <person name="Sidhu V.K."/>
            <person name="Sieber V."/>
            <person name="Tauch A."/>
            <person name="Watt S.A."/>
            <person name="Weisshaar B."/>
            <person name="Becker A."/>
            <person name="Niehaus K."/>
            <person name="Puehler A."/>
        </authorList>
    </citation>
    <scope>NUCLEOTIDE SEQUENCE [LARGE SCALE GENOMIC DNA]</scope>
    <source>
        <strain>B100</strain>
    </source>
</reference>
<protein>
    <recommendedName>
        <fullName>CRP-like protein Clp</fullName>
    </recommendedName>
    <alternativeName>
        <fullName>Catabolite activation-like protein</fullName>
        <shortName>CAP-like</shortName>
    </alternativeName>
</protein>
<feature type="chain" id="PRO_0000405703" description="CRP-like protein Clp">
    <location>
        <begin position="1"/>
        <end position="230"/>
    </location>
</feature>
<feature type="domain" description="HTH crp-type" evidence="2">
    <location>
        <begin position="158"/>
        <end position="230"/>
    </location>
</feature>
<feature type="DNA-binding region" description="H-T-H motif" evidence="2">
    <location>
        <begin position="190"/>
        <end position="209"/>
    </location>
</feature>
<feature type="binding site">
    <location>
        <begin position="18"/>
        <end position="139"/>
    </location>
    <ligand>
        <name>a nucleoside 3',5'-cyclic phosphate</name>
        <dbReference type="ChEBI" id="CHEBI:58464"/>
    </ligand>
</feature>
<proteinExistence type="inferred from homology"/>
<name>CLP_XANCB</name>
<keyword id="KW-0010">Activator</keyword>
<keyword id="KW-0021">Allosteric enzyme</keyword>
<keyword id="KW-0973">c-di-GMP</keyword>
<keyword id="KW-0963">Cytoplasm</keyword>
<keyword id="KW-0238">DNA-binding</keyword>
<keyword id="KW-0678">Repressor</keyword>
<keyword id="KW-0804">Transcription</keyword>
<keyword id="KW-0805">Transcription regulation</keyword>
<keyword id="KW-0843">Virulence</keyword>
<dbReference type="EMBL" id="AM920689">
    <property type="protein sequence ID" value="CAP49836.1"/>
    <property type="molecule type" value="Genomic_DNA"/>
</dbReference>
<dbReference type="SMR" id="B0RN01"/>
<dbReference type="KEGG" id="xca:xcc-b100_0502"/>
<dbReference type="HOGENOM" id="CLU_075053_3_5_6"/>
<dbReference type="Proteomes" id="UP000001188">
    <property type="component" value="Chromosome"/>
</dbReference>
<dbReference type="GO" id="GO:0005829">
    <property type="term" value="C:cytosol"/>
    <property type="evidence" value="ECO:0007669"/>
    <property type="project" value="TreeGrafter"/>
</dbReference>
<dbReference type="GO" id="GO:0003824">
    <property type="term" value="F:catalytic activity"/>
    <property type="evidence" value="ECO:0007669"/>
    <property type="project" value="UniProtKB-KW"/>
</dbReference>
<dbReference type="GO" id="GO:0035438">
    <property type="term" value="F:cyclic-di-GMP binding"/>
    <property type="evidence" value="ECO:0000250"/>
    <property type="project" value="UniProtKB"/>
</dbReference>
<dbReference type="GO" id="GO:0003677">
    <property type="term" value="F:DNA binding"/>
    <property type="evidence" value="ECO:0000250"/>
    <property type="project" value="UniProtKB"/>
</dbReference>
<dbReference type="GO" id="GO:0003700">
    <property type="term" value="F:DNA-binding transcription factor activity"/>
    <property type="evidence" value="ECO:0000250"/>
    <property type="project" value="UniProtKB"/>
</dbReference>
<dbReference type="GO" id="GO:0046983">
    <property type="term" value="F:protein dimerization activity"/>
    <property type="evidence" value="ECO:0000250"/>
    <property type="project" value="UniProtKB"/>
</dbReference>
<dbReference type="GO" id="GO:0006355">
    <property type="term" value="P:regulation of DNA-templated transcription"/>
    <property type="evidence" value="ECO:0000250"/>
    <property type="project" value="UniProtKB"/>
</dbReference>
<dbReference type="CDD" id="cd00038">
    <property type="entry name" value="CAP_ED"/>
    <property type="match status" value="1"/>
</dbReference>
<dbReference type="FunFam" id="1.10.10.10:FF:000006">
    <property type="entry name" value="cAMP-activated global transcriptional regulator CRP"/>
    <property type="match status" value="1"/>
</dbReference>
<dbReference type="FunFam" id="2.60.120.10:FF:000100">
    <property type="entry name" value="CRP-like protein Clp"/>
    <property type="match status" value="1"/>
</dbReference>
<dbReference type="Gene3D" id="2.60.120.10">
    <property type="entry name" value="Jelly Rolls"/>
    <property type="match status" value="1"/>
</dbReference>
<dbReference type="Gene3D" id="1.10.10.10">
    <property type="entry name" value="Winged helix-like DNA-binding domain superfamily/Winged helix DNA-binding domain"/>
    <property type="match status" value="1"/>
</dbReference>
<dbReference type="InterPro" id="IPR000595">
    <property type="entry name" value="cNMP-bd_dom"/>
</dbReference>
<dbReference type="InterPro" id="IPR018490">
    <property type="entry name" value="cNMP-bd_dom_sf"/>
</dbReference>
<dbReference type="InterPro" id="IPR050397">
    <property type="entry name" value="Env_Response_Regulators"/>
</dbReference>
<dbReference type="InterPro" id="IPR012318">
    <property type="entry name" value="HTH_CRP"/>
</dbReference>
<dbReference type="InterPro" id="IPR014710">
    <property type="entry name" value="RmlC-like_jellyroll"/>
</dbReference>
<dbReference type="InterPro" id="IPR018335">
    <property type="entry name" value="Tscrpt_reg_HTH_Crp-type_CS"/>
</dbReference>
<dbReference type="InterPro" id="IPR036388">
    <property type="entry name" value="WH-like_DNA-bd_sf"/>
</dbReference>
<dbReference type="InterPro" id="IPR036390">
    <property type="entry name" value="WH_DNA-bd_sf"/>
</dbReference>
<dbReference type="NCBIfam" id="NF008732">
    <property type="entry name" value="PRK11753.1"/>
    <property type="match status" value="1"/>
</dbReference>
<dbReference type="PANTHER" id="PTHR24567">
    <property type="entry name" value="CRP FAMILY TRANSCRIPTIONAL REGULATORY PROTEIN"/>
    <property type="match status" value="1"/>
</dbReference>
<dbReference type="PANTHER" id="PTHR24567:SF68">
    <property type="entry name" value="DNA-BINDING TRANSCRIPTIONAL DUAL REGULATOR CRP"/>
    <property type="match status" value="1"/>
</dbReference>
<dbReference type="Pfam" id="PF00027">
    <property type="entry name" value="cNMP_binding"/>
    <property type="match status" value="1"/>
</dbReference>
<dbReference type="Pfam" id="PF00325">
    <property type="entry name" value="Crp"/>
    <property type="match status" value="1"/>
</dbReference>
<dbReference type="PRINTS" id="PR00034">
    <property type="entry name" value="HTHCRP"/>
</dbReference>
<dbReference type="SMART" id="SM00100">
    <property type="entry name" value="cNMP"/>
    <property type="match status" value="1"/>
</dbReference>
<dbReference type="SMART" id="SM00419">
    <property type="entry name" value="HTH_CRP"/>
    <property type="match status" value="1"/>
</dbReference>
<dbReference type="SUPFAM" id="SSF51206">
    <property type="entry name" value="cAMP-binding domain-like"/>
    <property type="match status" value="1"/>
</dbReference>
<dbReference type="SUPFAM" id="SSF46785">
    <property type="entry name" value="Winged helix' DNA-binding domain"/>
    <property type="match status" value="1"/>
</dbReference>
<dbReference type="PROSITE" id="PS50042">
    <property type="entry name" value="CNMP_BINDING_3"/>
    <property type="match status" value="1"/>
</dbReference>
<dbReference type="PROSITE" id="PS00042">
    <property type="entry name" value="HTH_CRP_1"/>
    <property type="match status" value="1"/>
</dbReference>
<dbReference type="PROSITE" id="PS51063">
    <property type="entry name" value="HTH_CRP_2"/>
    <property type="match status" value="1"/>
</dbReference>
<organism>
    <name type="scientific">Xanthomonas campestris pv. campestris (strain B100)</name>
    <dbReference type="NCBI Taxonomy" id="509169"/>
    <lineage>
        <taxon>Bacteria</taxon>
        <taxon>Pseudomonadati</taxon>
        <taxon>Pseudomonadota</taxon>
        <taxon>Gammaproteobacteria</taxon>
        <taxon>Lysobacterales</taxon>
        <taxon>Lysobacteraceae</taxon>
        <taxon>Xanthomonas</taxon>
    </lineage>
</organism>
<gene>
    <name type="primary">clp</name>
    <name type="ordered locus">xcc-b100_0502</name>
</gene>